<dbReference type="EMBL" id="AE007869">
    <property type="protein sequence ID" value="AAK86350.1"/>
    <property type="molecule type" value="Genomic_DNA"/>
</dbReference>
<dbReference type="PIR" id="AD2642">
    <property type="entry name" value="AD2642"/>
</dbReference>
<dbReference type="PIR" id="E97424">
    <property type="entry name" value="E97424"/>
</dbReference>
<dbReference type="RefSeq" id="NP_353565.1">
    <property type="nucleotide sequence ID" value="NC_003062.2"/>
</dbReference>
<dbReference type="RefSeq" id="WP_006312939.1">
    <property type="nucleotide sequence ID" value="NC_003062.2"/>
</dbReference>
<dbReference type="STRING" id="176299.Atu0536"/>
<dbReference type="EnsemblBacteria" id="AAK86350">
    <property type="protein sequence ID" value="AAK86350"/>
    <property type="gene ID" value="Atu0536"/>
</dbReference>
<dbReference type="GeneID" id="1132574"/>
<dbReference type="KEGG" id="atu:Atu0536"/>
<dbReference type="PATRIC" id="fig|176299.10.peg.534"/>
<dbReference type="eggNOG" id="COG5328">
    <property type="taxonomic scope" value="Bacteria"/>
</dbReference>
<dbReference type="HOGENOM" id="CLU_112904_0_0_5"/>
<dbReference type="OrthoDB" id="9798434at2"/>
<dbReference type="PhylomeDB" id="Q8UHX2"/>
<dbReference type="BioCyc" id="AGRO:ATU0536-MONOMER"/>
<dbReference type="Proteomes" id="UP000000813">
    <property type="component" value="Chromosome circular"/>
</dbReference>
<dbReference type="HAMAP" id="MF_00678">
    <property type="entry name" value="UPF0262"/>
    <property type="match status" value="1"/>
</dbReference>
<dbReference type="InterPro" id="IPR008321">
    <property type="entry name" value="UCP032146"/>
</dbReference>
<dbReference type="NCBIfam" id="NF002769">
    <property type="entry name" value="PRK02853.1"/>
    <property type="match status" value="1"/>
</dbReference>
<dbReference type="Pfam" id="PF06793">
    <property type="entry name" value="UPF0262"/>
    <property type="match status" value="1"/>
</dbReference>
<dbReference type="PIRSF" id="PIRSF032146">
    <property type="entry name" value="UCP032146"/>
    <property type="match status" value="1"/>
</dbReference>
<keyword id="KW-1185">Reference proteome</keyword>
<comment type="similarity">
    <text evidence="1">Belongs to the UPF0262 family.</text>
</comment>
<feature type="chain" id="PRO_0000220326" description="UPF0262 protein Atu0536">
    <location>
        <begin position="1"/>
        <end position="157"/>
    </location>
</feature>
<evidence type="ECO:0000255" key="1">
    <source>
        <dbReference type="HAMAP-Rule" id="MF_00678"/>
    </source>
</evidence>
<name>Y536_AGRFC</name>
<organism>
    <name type="scientific">Agrobacterium fabrum (strain C58 / ATCC 33970)</name>
    <name type="common">Agrobacterium tumefaciens (strain C58)</name>
    <dbReference type="NCBI Taxonomy" id="176299"/>
    <lineage>
        <taxon>Bacteria</taxon>
        <taxon>Pseudomonadati</taxon>
        <taxon>Pseudomonadota</taxon>
        <taxon>Alphaproteobacteria</taxon>
        <taxon>Hyphomicrobiales</taxon>
        <taxon>Rhizobiaceae</taxon>
        <taxon>Rhizobium/Agrobacterium group</taxon>
        <taxon>Agrobacterium</taxon>
        <taxon>Agrobacterium tumefaciens complex</taxon>
    </lineage>
</organism>
<sequence length="157" mass="17799">MASGDFRLCDVVLDDSIGRSTPDVEHERAVAIFDLIEENTFEPAGHDGGPYRLHISLVDAKLVFAIKTEDDKDVSTHILSLTPFRRIIKDYFLICESYYEAIRSSTPSQIEAIDMGRRGIHNDGSQTLMDRLSGKIKVDFDTARRLFTLVCVLYWRG</sequence>
<proteinExistence type="inferred from homology"/>
<accession>Q8UHX2</accession>
<gene>
    <name type="ordered locus">Atu0536</name>
    <name type="ORF">AGR_C_947</name>
</gene>
<reference key="1">
    <citation type="journal article" date="2001" name="Science">
        <title>The genome of the natural genetic engineer Agrobacterium tumefaciens C58.</title>
        <authorList>
            <person name="Wood D.W."/>
            <person name="Setubal J.C."/>
            <person name="Kaul R."/>
            <person name="Monks D.E."/>
            <person name="Kitajima J.P."/>
            <person name="Okura V.K."/>
            <person name="Zhou Y."/>
            <person name="Chen L."/>
            <person name="Wood G.E."/>
            <person name="Almeida N.F. Jr."/>
            <person name="Woo L."/>
            <person name="Chen Y."/>
            <person name="Paulsen I.T."/>
            <person name="Eisen J.A."/>
            <person name="Karp P.D."/>
            <person name="Bovee D. Sr."/>
            <person name="Chapman P."/>
            <person name="Clendenning J."/>
            <person name="Deatherage G."/>
            <person name="Gillet W."/>
            <person name="Grant C."/>
            <person name="Kutyavin T."/>
            <person name="Levy R."/>
            <person name="Li M.-J."/>
            <person name="McClelland E."/>
            <person name="Palmieri A."/>
            <person name="Raymond C."/>
            <person name="Rouse G."/>
            <person name="Saenphimmachak C."/>
            <person name="Wu Z."/>
            <person name="Romero P."/>
            <person name="Gordon D."/>
            <person name="Zhang S."/>
            <person name="Yoo H."/>
            <person name="Tao Y."/>
            <person name="Biddle P."/>
            <person name="Jung M."/>
            <person name="Krespan W."/>
            <person name="Perry M."/>
            <person name="Gordon-Kamm B."/>
            <person name="Liao L."/>
            <person name="Kim S."/>
            <person name="Hendrick C."/>
            <person name="Zhao Z.-Y."/>
            <person name="Dolan M."/>
            <person name="Chumley F."/>
            <person name="Tingey S.V."/>
            <person name="Tomb J.-F."/>
            <person name="Gordon M.P."/>
            <person name="Olson M.V."/>
            <person name="Nester E.W."/>
        </authorList>
    </citation>
    <scope>NUCLEOTIDE SEQUENCE [LARGE SCALE GENOMIC DNA]</scope>
    <source>
        <strain>C58 / ATCC 33970</strain>
    </source>
</reference>
<reference key="2">
    <citation type="journal article" date="2001" name="Science">
        <title>Genome sequence of the plant pathogen and biotechnology agent Agrobacterium tumefaciens C58.</title>
        <authorList>
            <person name="Goodner B."/>
            <person name="Hinkle G."/>
            <person name="Gattung S."/>
            <person name="Miller N."/>
            <person name="Blanchard M."/>
            <person name="Qurollo B."/>
            <person name="Goldman B.S."/>
            <person name="Cao Y."/>
            <person name="Askenazi M."/>
            <person name="Halling C."/>
            <person name="Mullin L."/>
            <person name="Houmiel K."/>
            <person name="Gordon J."/>
            <person name="Vaudin M."/>
            <person name="Iartchouk O."/>
            <person name="Epp A."/>
            <person name="Liu F."/>
            <person name="Wollam C."/>
            <person name="Allinger M."/>
            <person name="Doughty D."/>
            <person name="Scott C."/>
            <person name="Lappas C."/>
            <person name="Markelz B."/>
            <person name="Flanagan C."/>
            <person name="Crowell C."/>
            <person name="Gurson J."/>
            <person name="Lomo C."/>
            <person name="Sear C."/>
            <person name="Strub G."/>
            <person name="Cielo C."/>
            <person name="Slater S."/>
        </authorList>
    </citation>
    <scope>NUCLEOTIDE SEQUENCE [LARGE SCALE GENOMIC DNA]</scope>
    <source>
        <strain>C58 / ATCC 33970</strain>
    </source>
</reference>
<protein>
    <recommendedName>
        <fullName evidence="1">UPF0262 protein Atu0536</fullName>
    </recommendedName>
</protein>